<dbReference type="EMBL" id="X52874">
    <property type="protein sequence ID" value="CAA37054.1"/>
    <property type="molecule type" value="Genomic_DNA"/>
</dbReference>
<dbReference type="PIR" id="S12242">
    <property type="entry name" value="S12242"/>
</dbReference>
<dbReference type="SMR" id="P41506"/>
<name>BP4C_BRANA</name>
<gene>
    <name type="primary">BP4C</name>
</gene>
<accession>P41506</accession>
<feature type="chain" id="PRO_0000064973" description="Protein BP4C">
    <location>
        <begin position="1"/>
        <end position="73"/>
    </location>
</feature>
<sequence length="73" mass="7989">MKKSLQLSFTFLIISIILSQGMMADAQKKNCPRKIPIKGSYCAPTICLDKCKKQHGTVGSCAEEKGFCNCACK</sequence>
<comment type="tissue specificity">
    <text>Pollen specific.</text>
</comment>
<comment type="developmental stage">
    <text>Activated during early microspore development.</text>
</comment>
<protein>
    <recommendedName>
        <fullName>Protein BP4C</fullName>
    </recommendedName>
</protein>
<organism>
    <name type="scientific">Brassica napus</name>
    <name type="common">Rape</name>
    <dbReference type="NCBI Taxonomy" id="3708"/>
    <lineage>
        <taxon>Eukaryota</taxon>
        <taxon>Viridiplantae</taxon>
        <taxon>Streptophyta</taxon>
        <taxon>Embryophyta</taxon>
        <taxon>Tracheophyta</taxon>
        <taxon>Spermatophyta</taxon>
        <taxon>Magnoliopsida</taxon>
        <taxon>eudicotyledons</taxon>
        <taxon>Gunneridae</taxon>
        <taxon>Pentapetalae</taxon>
        <taxon>rosids</taxon>
        <taxon>malvids</taxon>
        <taxon>Brassicales</taxon>
        <taxon>Brassicaceae</taxon>
        <taxon>Brassiceae</taxon>
        <taxon>Brassica</taxon>
    </lineage>
</organism>
<proteinExistence type="evidence at transcript level"/>
<reference key="1">
    <citation type="journal article" date="1990" name="Plant Mol. Biol.">
        <title>Characterization of a pollen-specific gene family from Brassica napus which is activated during early microspore development.</title>
        <authorList>
            <person name="Albani D."/>
            <person name="Robert L.S."/>
            <person name="Donaldson P.A."/>
            <person name="Altosaar I."/>
            <person name="Arnison P.G."/>
            <person name="Fabijanski S.F."/>
        </authorList>
    </citation>
    <scope>NUCLEOTIDE SEQUENCE [GENOMIC DNA]</scope>
    <source>
        <strain>cv. Westar</strain>
    </source>
</reference>